<sequence>MNFKDLRDFLDYLEQRGELKRITHPIDPHYEMTEISDRTLRAKGPALLFENPLGYDFPVLTNLFGTPERVAMGMGRQQVQELRDVGQWLAYLKEPEPPRGLKELIEKLPVFKQVLNMPVKRLRRAPCQEIVWQGDAVDLDKIPVMSCWPDDVAPLLTWGLTITRGPHKKRQNLGIYRQQKIARNKVIMRWLAHRGGALDLRDWMEKHPGEPFPVSVAFGADPATILGAVTPVPDTLSEYAFAGLLRGSRTEVVKSISNDLEVPASAEIVLEGYIDPNEFADEGPYGDHTGYYNEVERHHVFTVTHVTMRNKPIYHSTYTGRPPDEPAVLGVALNEVFVPILQKQFPEIADFYLPPEGCSYRMAIVTLKKQYPGHAKRVMLGVWSFLRQFMYTKFVIVCDEQVNARDWPQVIAAMVNHMSPLRDTLFIEHTPIDSLDFASPVVGLGSKIGLDATAKWPAELAVSNSDQSDKTTELSLEALKACLSDEADVLDVALPEAANDKLVLLLINKQEAGQAQQLLQRVVDKLNGDSPLKFVILCDDDVNIHDWNDVIWAMTTRMDPARDSLRIVGQDLICFDATNKLPDEVEREWGTPIRKDPKLVAKIDSLWDELGIV</sequence>
<proteinExistence type="inferred from homology"/>
<dbReference type="EC" id="4.1.1.-"/>
<dbReference type="EMBL" id="AE003852">
    <property type="protein sequence ID" value="AAF93483.1"/>
    <property type="molecule type" value="Genomic_DNA"/>
</dbReference>
<dbReference type="PIR" id="G82338">
    <property type="entry name" value="G82338"/>
</dbReference>
<dbReference type="RefSeq" id="NP_229964.1">
    <property type="nucleotide sequence ID" value="NC_002505.1"/>
</dbReference>
<dbReference type="RefSeq" id="WP_001009479.1">
    <property type="nucleotide sequence ID" value="NZ_LT906614.1"/>
</dbReference>
<dbReference type="SMR" id="Q9KV48"/>
<dbReference type="STRING" id="243277.VC_0309"/>
<dbReference type="DNASU" id="2614979"/>
<dbReference type="EnsemblBacteria" id="AAF93483">
    <property type="protein sequence ID" value="AAF93483"/>
    <property type="gene ID" value="VC_0309"/>
</dbReference>
<dbReference type="KEGG" id="vch:VC_0309"/>
<dbReference type="PATRIC" id="fig|243277.26.peg.290"/>
<dbReference type="eggNOG" id="COG0043">
    <property type="taxonomic scope" value="Bacteria"/>
</dbReference>
<dbReference type="HOGENOM" id="CLU_023348_4_0_6"/>
<dbReference type="UniPathway" id="UPA00232"/>
<dbReference type="Proteomes" id="UP000000584">
    <property type="component" value="Chromosome 1"/>
</dbReference>
<dbReference type="GO" id="GO:0005737">
    <property type="term" value="C:cytoplasm"/>
    <property type="evidence" value="ECO:0000318"/>
    <property type="project" value="GO_Central"/>
</dbReference>
<dbReference type="GO" id="GO:0005829">
    <property type="term" value="C:cytosol"/>
    <property type="evidence" value="ECO:0000318"/>
    <property type="project" value="GO_Central"/>
</dbReference>
<dbReference type="GO" id="GO:0005886">
    <property type="term" value="C:plasma membrane"/>
    <property type="evidence" value="ECO:0007669"/>
    <property type="project" value="UniProtKB-SubCell"/>
</dbReference>
<dbReference type="GO" id="GO:0008694">
    <property type="term" value="F:3-octaprenyl-4-hydroxybenzoate carboxy-lyase activity"/>
    <property type="evidence" value="ECO:0000318"/>
    <property type="project" value="GO_Central"/>
</dbReference>
<dbReference type="GO" id="GO:0006744">
    <property type="term" value="P:ubiquinone biosynthetic process"/>
    <property type="evidence" value="ECO:0000318"/>
    <property type="project" value="GO_Central"/>
</dbReference>
<dbReference type="FunFam" id="3.40.1670.10:FF:000001">
    <property type="entry name" value="3-octaprenyl-4-hydroxybenzoate carboxy-lyase"/>
    <property type="match status" value="1"/>
</dbReference>
<dbReference type="Gene3D" id="1.20.5.570">
    <property type="entry name" value="Single helix bin"/>
    <property type="match status" value="1"/>
</dbReference>
<dbReference type="Gene3D" id="3.40.1670.10">
    <property type="entry name" value="UbiD C-terminal domain-like"/>
    <property type="match status" value="2"/>
</dbReference>
<dbReference type="InterPro" id="IPR002830">
    <property type="entry name" value="UbiD"/>
</dbReference>
<dbReference type="InterPro" id="IPR049381">
    <property type="entry name" value="UbiD-like_C"/>
</dbReference>
<dbReference type="InterPro" id="IPR049383">
    <property type="entry name" value="UbiD-like_N"/>
</dbReference>
<dbReference type="InterPro" id="IPR048304">
    <property type="entry name" value="UbiD_Rift_dom"/>
</dbReference>
<dbReference type="NCBIfam" id="NF008175">
    <property type="entry name" value="PRK10922.1"/>
    <property type="match status" value="1"/>
</dbReference>
<dbReference type="NCBIfam" id="TIGR00148">
    <property type="entry name" value="UbiD family decarboxylase"/>
    <property type="match status" value="1"/>
</dbReference>
<dbReference type="PANTHER" id="PTHR30108">
    <property type="entry name" value="3-OCTAPRENYL-4-HYDROXYBENZOATE CARBOXY-LYASE-RELATED"/>
    <property type="match status" value="1"/>
</dbReference>
<dbReference type="PANTHER" id="PTHR30108:SF17">
    <property type="entry name" value="FERULIC ACID DECARBOXYLASE 1"/>
    <property type="match status" value="1"/>
</dbReference>
<dbReference type="Pfam" id="PF01977">
    <property type="entry name" value="UbiD"/>
    <property type="match status" value="1"/>
</dbReference>
<dbReference type="Pfam" id="PF20696">
    <property type="entry name" value="UbiD_C"/>
    <property type="match status" value="2"/>
</dbReference>
<dbReference type="Pfam" id="PF20695">
    <property type="entry name" value="UbiD_N"/>
    <property type="match status" value="1"/>
</dbReference>
<dbReference type="SUPFAM" id="SSF50475">
    <property type="entry name" value="FMN-binding split barrel"/>
    <property type="match status" value="1"/>
</dbReference>
<dbReference type="SUPFAM" id="SSF143968">
    <property type="entry name" value="UbiD C-terminal domain-like"/>
    <property type="match status" value="2"/>
</dbReference>
<keyword id="KW-1003">Cell membrane</keyword>
<keyword id="KW-0210">Decarboxylase</keyword>
<keyword id="KW-0456">Lyase</keyword>
<keyword id="KW-0472">Membrane</keyword>
<keyword id="KW-1185">Reference proteome</keyword>
<keyword id="KW-0831">Ubiquinone biosynthesis</keyword>
<name>UBID_VIBCH</name>
<comment type="function">
    <text evidence="1">Catalyzes the decarboxylation of 3-octaprenyl-4-hydroxy benzoate to 2-octaprenylphenol.</text>
</comment>
<comment type="cofactor">
    <cofactor evidence="1">
        <name>a divalent metal cation</name>
        <dbReference type="ChEBI" id="CHEBI:60240"/>
    </cofactor>
</comment>
<comment type="pathway">
    <text>Cofactor biosynthesis; ubiquinone biosynthesis.</text>
</comment>
<comment type="subunit">
    <text evidence="1">Homohexamer.</text>
</comment>
<comment type="subcellular location">
    <subcellularLocation>
        <location evidence="1">Cell membrane</location>
        <topology evidence="1">Peripheral membrane protein</topology>
    </subcellularLocation>
</comment>
<comment type="similarity">
    <text evidence="2">Belongs to the UbiD family.</text>
</comment>
<gene>
    <name type="primary">ubiD</name>
    <name type="ordered locus">VC_0309</name>
</gene>
<evidence type="ECO:0000250" key="1"/>
<evidence type="ECO:0000305" key="2"/>
<feature type="chain" id="PRO_0000157366" description="3-octaprenyl-4-hydroxybenzoate carboxy-lyase">
    <location>
        <begin position="1"/>
        <end position="613"/>
    </location>
</feature>
<feature type="region of interest" description="Unknown insert">
    <location>
        <begin position="460"/>
        <end position="584"/>
    </location>
</feature>
<organism>
    <name type="scientific">Vibrio cholerae serotype O1 (strain ATCC 39315 / El Tor Inaba N16961)</name>
    <dbReference type="NCBI Taxonomy" id="243277"/>
    <lineage>
        <taxon>Bacteria</taxon>
        <taxon>Pseudomonadati</taxon>
        <taxon>Pseudomonadota</taxon>
        <taxon>Gammaproteobacteria</taxon>
        <taxon>Vibrionales</taxon>
        <taxon>Vibrionaceae</taxon>
        <taxon>Vibrio</taxon>
    </lineage>
</organism>
<reference key="1">
    <citation type="journal article" date="2000" name="Nature">
        <title>DNA sequence of both chromosomes of the cholera pathogen Vibrio cholerae.</title>
        <authorList>
            <person name="Heidelberg J.F."/>
            <person name="Eisen J.A."/>
            <person name="Nelson W.C."/>
            <person name="Clayton R.A."/>
            <person name="Gwinn M.L."/>
            <person name="Dodson R.J."/>
            <person name="Haft D.H."/>
            <person name="Hickey E.K."/>
            <person name="Peterson J.D."/>
            <person name="Umayam L.A."/>
            <person name="Gill S.R."/>
            <person name="Nelson K.E."/>
            <person name="Read T.D."/>
            <person name="Tettelin H."/>
            <person name="Richardson D.L."/>
            <person name="Ermolaeva M.D."/>
            <person name="Vamathevan J.J."/>
            <person name="Bass S."/>
            <person name="Qin H."/>
            <person name="Dragoi I."/>
            <person name="Sellers P."/>
            <person name="McDonald L.A."/>
            <person name="Utterback T.R."/>
            <person name="Fleischmann R.D."/>
            <person name="Nierman W.C."/>
            <person name="White O."/>
            <person name="Salzberg S.L."/>
            <person name="Smith H.O."/>
            <person name="Colwell R.R."/>
            <person name="Mekalanos J.J."/>
            <person name="Venter J.C."/>
            <person name="Fraser C.M."/>
        </authorList>
    </citation>
    <scope>NUCLEOTIDE SEQUENCE [LARGE SCALE GENOMIC DNA]</scope>
    <source>
        <strain>ATCC 39315 / El Tor Inaba N16961</strain>
    </source>
</reference>
<accession>Q9KV48</accession>
<protein>
    <recommendedName>
        <fullName>3-octaprenyl-4-hydroxybenzoate carboxy-lyase</fullName>
        <ecNumber>4.1.1.-</ecNumber>
    </recommendedName>
    <alternativeName>
        <fullName>Polyprenyl p-hydroxybenzoate decarboxylase</fullName>
    </alternativeName>
</protein>